<evidence type="ECO:0000250" key="1"/>
<evidence type="ECO:0000255" key="2"/>
<evidence type="ECO:0000305" key="3"/>
<sequence length="213" mass="23973">GANLLKIHDGGYVPVMIATAFTVIMWTWRRGTAILMEKTRHTDIPLSSFVSSIERKSDHSPAHVPGTAIFLTSDPESAPAALLHNLKHNHVLHDKNVILTIRTINKPRVAQEDRYTVEKVSDRFSRVELRFGFMESQNVSQALATLRKTGLKFDIMSTSFYLGRRKLVPDAKSGMPHWQDRLYIALANAATDPSDYFRLPANRVVELGSHVII</sequence>
<dbReference type="EMBL" id="AJ311183">
    <property type="protein sequence ID" value="CAC38772.1"/>
    <property type="molecule type" value="Genomic_DNA"/>
</dbReference>
<dbReference type="GO" id="GO:0005886">
    <property type="term" value="C:plasma membrane"/>
    <property type="evidence" value="ECO:0007669"/>
    <property type="project" value="UniProtKB-SubCell"/>
</dbReference>
<dbReference type="GO" id="GO:0015079">
    <property type="term" value="F:potassium ion transmembrane transporter activity"/>
    <property type="evidence" value="ECO:0007669"/>
    <property type="project" value="InterPro"/>
</dbReference>
<dbReference type="GO" id="GO:0015293">
    <property type="term" value="F:symporter activity"/>
    <property type="evidence" value="ECO:0007669"/>
    <property type="project" value="UniProtKB-KW"/>
</dbReference>
<dbReference type="InterPro" id="IPR003855">
    <property type="entry name" value="K+_transporter"/>
</dbReference>
<dbReference type="InterPro" id="IPR053952">
    <property type="entry name" value="K_trans_C"/>
</dbReference>
<dbReference type="InterPro" id="IPR053951">
    <property type="entry name" value="K_trans_N"/>
</dbReference>
<dbReference type="PANTHER" id="PTHR30540:SF79">
    <property type="entry name" value="LOW AFFINITY POTASSIUM TRANSPORT SYSTEM PROTEIN KUP"/>
    <property type="match status" value="1"/>
</dbReference>
<dbReference type="PANTHER" id="PTHR30540">
    <property type="entry name" value="OSMOTIC STRESS POTASSIUM TRANSPORTER"/>
    <property type="match status" value="1"/>
</dbReference>
<dbReference type="Pfam" id="PF02705">
    <property type="entry name" value="K_trans"/>
    <property type="match status" value="1"/>
</dbReference>
<dbReference type="Pfam" id="PF22776">
    <property type="entry name" value="K_trans_C"/>
    <property type="match status" value="1"/>
</dbReference>
<reference key="1">
    <citation type="submission" date="2001-05" db="EMBL/GenBank/DDBJ databases">
        <title>Bacterial osmotolerance and nitrogen-fixing efficiency in Rhizobium-legume symbiosis.</title>
        <authorList>
            <person name="Sanjuan J."/>
        </authorList>
    </citation>
    <scope>NUCLEOTIDE SEQUENCE [GENOMIC DNA]</scope>
    <source>
        <strain>CIAT899</strain>
    </source>
</reference>
<gene>
    <name type="primary">kup</name>
</gene>
<organism>
    <name type="scientific">Rhizobium tropici</name>
    <dbReference type="NCBI Taxonomy" id="398"/>
    <lineage>
        <taxon>Bacteria</taxon>
        <taxon>Pseudomonadati</taxon>
        <taxon>Pseudomonadota</taxon>
        <taxon>Alphaproteobacteria</taxon>
        <taxon>Hyphomicrobiales</taxon>
        <taxon>Rhizobiaceae</taxon>
        <taxon>Rhizobium/Agrobacterium group</taxon>
        <taxon>Rhizobium</taxon>
    </lineage>
</organism>
<feature type="chain" id="PRO_0000209050" description="Probable potassium transport system protein Kup">
    <location>
        <begin position="1" status="less than"/>
        <end position="213"/>
    </location>
</feature>
<feature type="transmembrane region" description="Helical" evidence="2">
    <location>
        <begin position="10"/>
        <end position="28"/>
    </location>
</feature>
<feature type="non-terminal residue">
    <location>
        <position position="1"/>
    </location>
</feature>
<proteinExistence type="inferred from homology"/>
<protein>
    <recommendedName>
        <fullName>Probable potassium transport system protein Kup</fullName>
    </recommendedName>
</protein>
<comment type="function">
    <text evidence="1">Transport of potassium into the cell. Likely operates as a K(+):H(+) symporter.</text>
</comment>
<comment type="catalytic activity">
    <reaction evidence="1">
        <text>K(+)(in) + H(+)(in) = K(+)(out) + H(+)(out)</text>
        <dbReference type="Rhea" id="RHEA:28490"/>
        <dbReference type="ChEBI" id="CHEBI:15378"/>
        <dbReference type="ChEBI" id="CHEBI:29103"/>
    </reaction>
    <physiologicalReaction direction="right-to-left" evidence="1">
        <dbReference type="Rhea" id="RHEA:28492"/>
    </physiologicalReaction>
</comment>
<comment type="subcellular location">
    <subcellularLocation>
        <location evidence="1">Cell inner membrane</location>
        <topology evidence="1">Multi-pass membrane protein</topology>
    </subcellularLocation>
</comment>
<comment type="similarity">
    <text evidence="3">Belongs to the HAK/KUP transporter (TC 2.A.72) family.</text>
</comment>
<name>KUP_RHITR</name>
<keyword id="KW-0997">Cell inner membrane</keyword>
<keyword id="KW-1003">Cell membrane</keyword>
<keyword id="KW-0406">Ion transport</keyword>
<keyword id="KW-0472">Membrane</keyword>
<keyword id="KW-0630">Potassium</keyword>
<keyword id="KW-0633">Potassium transport</keyword>
<keyword id="KW-0769">Symport</keyword>
<keyword id="KW-0812">Transmembrane</keyword>
<keyword id="KW-1133">Transmembrane helix</keyword>
<keyword id="KW-0813">Transport</keyword>
<accession>Q93S26</accession>